<reference key="1">
    <citation type="journal article" date="2008" name="BMC Genomics">
        <title>Genomics of an extreme psychrophile, Psychromonas ingrahamii.</title>
        <authorList>
            <person name="Riley M."/>
            <person name="Staley J.T."/>
            <person name="Danchin A."/>
            <person name="Wang T.Z."/>
            <person name="Brettin T.S."/>
            <person name="Hauser L.J."/>
            <person name="Land M.L."/>
            <person name="Thompson L.S."/>
        </authorList>
    </citation>
    <scope>NUCLEOTIDE SEQUENCE [LARGE SCALE GENOMIC DNA]</scope>
    <source>
        <strain>DSM 17664 / CCUG 51855 / 37</strain>
    </source>
</reference>
<organism>
    <name type="scientific">Psychromonas ingrahamii (strain DSM 17664 / CCUG 51855 / 37)</name>
    <dbReference type="NCBI Taxonomy" id="357804"/>
    <lineage>
        <taxon>Bacteria</taxon>
        <taxon>Pseudomonadati</taxon>
        <taxon>Pseudomonadota</taxon>
        <taxon>Gammaproteobacteria</taxon>
        <taxon>Alteromonadales</taxon>
        <taxon>Psychromonadaceae</taxon>
        <taxon>Psychromonas</taxon>
    </lineage>
</organism>
<proteinExistence type="inferred from homology"/>
<keyword id="KW-0028">Amino-acid biosynthesis</keyword>
<keyword id="KW-0055">Arginine biosynthesis</keyword>
<keyword id="KW-0067">ATP-binding</keyword>
<keyword id="KW-0963">Cytoplasm</keyword>
<keyword id="KW-0436">Ligase</keyword>
<keyword id="KW-0547">Nucleotide-binding</keyword>
<keyword id="KW-1185">Reference proteome</keyword>
<evidence type="ECO:0000255" key="1">
    <source>
        <dbReference type="HAMAP-Rule" id="MF_00005"/>
    </source>
</evidence>
<gene>
    <name evidence="1" type="primary">argG</name>
    <name type="ordered locus">Ping_0231</name>
</gene>
<protein>
    <recommendedName>
        <fullName evidence="1">Argininosuccinate synthase</fullName>
        <ecNumber evidence="1">6.3.4.5</ecNumber>
    </recommendedName>
    <alternativeName>
        <fullName evidence="1">Citrulline--aspartate ligase</fullName>
    </alternativeName>
</protein>
<dbReference type="EC" id="6.3.4.5" evidence="1"/>
<dbReference type="EMBL" id="CP000510">
    <property type="protein sequence ID" value="ABM02098.1"/>
    <property type="molecule type" value="Genomic_DNA"/>
</dbReference>
<dbReference type="RefSeq" id="WP_011768657.1">
    <property type="nucleotide sequence ID" value="NC_008709.1"/>
</dbReference>
<dbReference type="SMR" id="A1SRI3"/>
<dbReference type="STRING" id="357804.Ping_0231"/>
<dbReference type="KEGG" id="pin:Ping_0231"/>
<dbReference type="eggNOG" id="COG0137">
    <property type="taxonomic scope" value="Bacteria"/>
</dbReference>
<dbReference type="HOGENOM" id="CLU_032784_4_2_6"/>
<dbReference type="OrthoDB" id="9801641at2"/>
<dbReference type="UniPathway" id="UPA00068">
    <property type="reaction ID" value="UER00113"/>
</dbReference>
<dbReference type="Proteomes" id="UP000000639">
    <property type="component" value="Chromosome"/>
</dbReference>
<dbReference type="GO" id="GO:0005737">
    <property type="term" value="C:cytoplasm"/>
    <property type="evidence" value="ECO:0007669"/>
    <property type="project" value="UniProtKB-SubCell"/>
</dbReference>
<dbReference type="GO" id="GO:0004055">
    <property type="term" value="F:argininosuccinate synthase activity"/>
    <property type="evidence" value="ECO:0007669"/>
    <property type="project" value="UniProtKB-UniRule"/>
</dbReference>
<dbReference type="GO" id="GO:0005524">
    <property type="term" value="F:ATP binding"/>
    <property type="evidence" value="ECO:0007669"/>
    <property type="project" value="UniProtKB-UniRule"/>
</dbReference>
<dbReference type="GO" id="GO:0000053">
    <property type="term" value="P:argininosuccinate metabolic process"/>
    <property type="evidence" value="ECO:0007669"/>
    <property type="project" value="TreeGrafter"/>
</dbReference>
<dbReference type="GO" id="GO:0006526">
    <property type="term" value="P:L-arginine biosynthetic process"/>
    <property type="evidence" value="ECO:0007669"/>
    <property type="project" value="UniProtKB-UniRule"/>
</dbReference>
<dbReference type="GO" id="GO:0000050">
    <property type="term" value="P:urea cycle"/>
    <property type="evidence" value="ECO:0007669"/>
    <property type="project" value="TreeGrafter"/>
</dbReference>
<dbReference type="CDD" id="cd01999">
    <property type="entry name" value="ASS"/>
    <property type="match status" value="1"/>
</dbReference>
<dbReference type="FunFam" id="3.40.50.620:FF:000019">
    <property type="entry name" value="Argininosuccinate synthase"/>
    <property type="match status" value="1"/>
</dbReference>
<dbReference type="FunFam" id="3.90.1260.10:FF:000007">
    <property type="entry name" value="Argininosuccinate synthase"/>
    <property type="match status" value="1"/>
</dbReference>
<dbReference type="Gene3D" id="3.90.1260.10">
    <property type="entry name" value="Argininosuccinate synthetase, chain A, domain 2"/>
    <property type="match status" value="1"/>
</dbReference>
<dbReference type="Gene3D" id="3.40.50.620">
    <property type="entry name" value="HUPs"/>
    <property type="match status" value="1"/>
</dbReference>
<dbReference type="Gene3D" id="1.20.5.470">
    <property type="entry name" value="Single helix bin"/>
    <property type="match status" value="1"/>
</dbReference>
<dbReference type="HAMAP" id="MF_00005">
    <property type="entry name" value="Arg_succ_synth_type1"/>
    <property type="match status" value="1"/>
</dbReference>
<dbReference type="InterPro" id="IPR048268">
    <property type="entry name" value="Arginosuc_syn_C"/>
</dbReference>
<dbReference type="InterPro" id="IPR048267">
    <property type="entry name" value="Arginosuc_syn_N"/>
</dbReference>
<dbReference type="InterPro" id="IPR001518">
    <property type="entry name" value="Arginosuc_synth"/>
</dbReference>
<dbReference type="InterPro" id="IPR018223">
    <property type="entry name" value="Arginosuc_synth_CS"/>
</dbReference>
<dbReference type="InterPro" id="IPR023434">
    <property type="entry name" value="Arginosuc_synth_type_1_subfam"/>
</dbReference>
<dbReference type="InterPro" id="IPR024074">
    <property type="entry name" value="AS_cat/multimer_dom_body"/>
</dbReference>
<dbReference type="InterPro" id="IPR014729">
    <property type="entry name" value="Rossmann-like_a/b/a_fold"/>
</dbReference>
<dbReference type="NCBIfam" id="TIGR00032">
    <property type="entry name" value="argG"/>
    <property type="match status" value="1"/>
</dbReference>
<dbReference type="NCBIfam" id="NF001770">
    <property type="entry name" value="PRK00509.1"/>
    <property type="match status" value="1"/>
</dbReference>
<dbReference type="PANTHER" id="PTHR11587">
    <property type="entry name" value="ARGININOSUCCINATE SYNTHASE"/>
    <property type="match status" value="1"/>
</dbReference>
<dbReference type="PANTHER" id="PTHR11587:SF2">
    <property type="entry name" value="ARGININOSUCCINATE SYNTHASE"/>
    <property type="match status" value="1"/>
</dbReference>
<dbReference type="Pfam" id="PF20979">
    <property type="entry name" value="Arginosuc_syn_C"/>
    <property type="match status" value="1"/>
</dbReference>
<dbReference type="Pfam" id="PF00764">
    <property type="entry name" value="Arginosuc_synth"/>
    <property type="match status" value="1"/>
</dbReference>
<dbReference type="SUPFAM" id="SSF52402">
    <property type="entry name" value="Adenine nucleotide alpha hydrolases-like"/>
    <property type="match status" value="1"/>
</dbReference>
<dbReference type="SUPFAM" id="SSF69864">
    <property type="entry name" value="Argininosuccinate synthetase, C-terminal domain"/>
    <property type="match status" value="1"/>
</dbReference>
<dbReference type="PROSITE" id="PS00564">
    <property type="entry name" value="ARGININOSUCCIN_SYN_1"/>
    <property type="match status" value="1"/>
</dbReference>
<dbReference type="PROSITE" id="PS00565">
    <property type="entry name" value="ARGININOSUCCIN_SYN_2"/>
    <property type="match status" value="1"/>
</dbReference>
<comment type="catalytic activity">
    <reaction evidence="1">
        <text>L-citrulline + L-aspartate + ATP = 2-(N(omega)-L-arginino)succinate + AMP + diphosphate + H(+)</text>
        <dbReference type="Rhea" id="RHEA:10932"/>
        <dbReference type="ChEBI" id="CHEBI:15378"/>
        <dbReference type="ChEBI" id="CHEBI:29991"/>
        <dbReference type="ChEBI" id="CHEBI:30616"/>
        <dbReference type="ChEBI" id="CHEBI:33019"/>
        <dbReference type="ChEBI" id="CHEBI:57472"/>
        <dbReference type="ChEBI" id="CHEBI:57743"/>
        <dbReference type="ChEBI" id="CHEBI:456215"/>
        <dbReference type="EC" id="6.3.4.5"/>
    </reaction>
</comment>
<comment type="pathway">
    <text evidence="1">Amino-acid biosynthesis; L-arginine biosynthesis; L-arginine from L-ornithine and carbamoyl phosphate: step 2/3.</text>
</comment>
<comment type="subunit">
    <text evidence="1">Homotetramer.</text>
</comment>
<comment type="subcellular location">
    <subcellularLocation>
        <location evidence="1">Cytoplasm</location>
    </subcellularLocation>
</comment>
<comment type="similarity">
    <text evidence="1">Belongs to the argininosuccinate synthase family. Type 1 subfamily.</text>
</comment>
<accession>A1SRI3</accession>
<name>ASSY_PSYIN</name>
<sequence length="402" mass="44241">MSKVKKVVLAYSGGLDTSAIIPWLKETYDDCEIIAFCADVGQGAEELVGLEEKALASGASECHIVDLKEEFVKDYIYPTMASGAVYEGTYLLGTAMARPIIAKAQVEVALKVGADALCHGCTGKGNDQIRFESCFAALAPELQVIAPWREWEMESREDLLDYLAERNIETTASATKIYSRDANAWHISHEGGELENPWNAPSKGVWTLTVDPEDAPDKPEYLTIKVENARVVAVDGVELSPYDALMLLNEKAAAHGVGRVDITENRTVGMKSRGCYETPGGTVMVAALRGIDELVHDKPARKWRDQVGQEFTHLVYDGRWFTPLCGSLLAASEALAKDVNGEVVVKMYKGQVTAEQKRSPNSLYSEEFATFGDDNVYNQKHAEGFIRLYSLSSRIRTLNSKK</sequence>
<feature type="chain" id="PRO_0000321317" description="Argininosuccinate synthase">
    <location>
        <begin position="1"/>
        <end position="402"/>
    </location>
</feature>
<feature type="binding site" evidence="1">
    <location>
        <begin position="10"/>
        <end position="18"/>
    </location>
    <ligand>
        <name>ATP</name>
        <dbReference type="ChEBI" id="CHEBI:30616"/>
    </ligand>
</feature>
<feature type="binding site" evidence="1">
    <location>
        <position position="38"/>
    </location>
    <ligand>
        <name>ATP</name>
        <dbReference type="ChEBI" id="CHEBI:30616"/>
    </ligand>
</feature>
<feature type="binding site" evidence="1">
    <location>
        <position position="90"/>
    </location>
    <ligand>
        <name>L-citrulline</name>
        <dbReference type="ChEBI" id="CHEBI:57743"/>
    </ligand>
</feature>
<feature type="binding site" evidence="1">
    <location>
        <position position="120"/>
    </location>
    <ligand>
        <name>ATP</name>
        <dbReference type="ChEBI" id="CHEBI:30616"/>
    </ligand>
</feature>
<feature type="binding site" evidence="1">
    <location>
        <position position="122"/>
    </location>
    <ligand>
        <name>L-aspartate</name>
        <dbReference type="ChEBI" id="CHEBI:29991"/>
    </ligand>
</feature>
<feature type="binding site" evidence="1">
    <location>
        <position position="126"/>
    </location>
    <ligand>
        <name>L-aspartate</name>
        <dbReference type="ChEBI" id="CHEBI:29991"/>
    </ligand>
</feature>
<feature type="binding site" evidence="1">
    <location>
        <position position="126"/>
    </location>
    <ligand>
        <name>L-citrulline</name>
        <dbReference type="ChEBI" id="CHEBI:57743"/>
    </ligand>
</feature>
<feature type="binding site" evidence="1">
    <location>
        <position position="127"/>
    </location>
    <ligand>
        <name>L-aspartate</name>
        <dbReference type="ChEBI" id="CHEBI:29991"/>
    </ligand>
</feature>
<feature type="binding site" evidence="1">
    <location>
        <position position="130"/>
    </location>
    <ligand>
        <name>L-citrulline</name>
        <dbReference type="ChEBI" id="CHEBI:57743"/>
    </ligand>
</feature>
<feature type="binding site" evidence="1">
    <location>
        <position position="179"/>
    </location>
    <ligand>
        <name>L-citrulline</name>
        <dbReference type="ChEBI" id="CHEBI:57743"/>
    </ligand>
</feature>
<feature type="binding site" evidence="1">
    <location>
        <position position="188"/>
    </location>
    <ligand>
        <name>L-citrulline</name>
        <dbReference type="ChEBI" id="CHEBI:57743"/>
    </ligand>
</feature>
<feature type="binding site" evidence="1">
    <location>
        <position position="264"/>
    </location>
    <ligand>
        <name>L-citrulline</name>
        <dbReference type="ChEBI" id="CHEBI:57743"/>
    </ligand>
</feature>
<feature type="binding site" evidence="1">
    <location>
        <position position="276"/>
    </location>
    <ligand>
        <name>L-citrulline</name>
        <dbReference type="ChEBI" id="CHEBI:57743"/>
    </ligand>
</feature>